<comment type="function">
    <text evidence="1">Catalyzes the complicated ring closure reaction between the two acyclic compounds 1-deoxy-D-xylulose-5-phosphate (DXP) and 3-amino-2-oxopropyl phosphate (1-amino-acetone-3-phosphate or AAP) to form pyridoxine 5'-phosphate (PNP) and inorganic phosphate.</text>
</comment>
<comment type="catalytic activity">
    <reaction evidence="1">
        <text>3-amino-2-oxopropyl phosphate + 1-deoxy-D-xylulose 5-phosphate = pyridoxine 5'-phosphate + phosphate + 2 H2O + H(+)</text>
        <dbReference type="Rhea" id="RHEA:15265"/>
        <dbReference type="ChEBI" id="CHEBI:15377"/>
        <dbReference type="ChEBI" id="CHEBI:15378"/>
        <dbReference type="ChEBI" id="CHEBI:43474"/>
        <dbReference type="ChEBI" id="CHEBI:57279"/>
        <dbReference type="ChEBI" id="CHEBI:57792"/>
        <dbReference type="ChEBI" id="CHEBI:58589"/>
        <dbReference type="EC" id="2.6.99.2"/>
    </reaction>
</comment>
<comment type="pathway">
    <text evidence="1">Cofactor biosynthesis; pyridoxine 5'-phosphate biosynthesis; pyridoxine 5'-phosphate from D-erythrose 4-phosphate: step 5/5.</text>
</comment>
<comment type="subunit">
    <text evidence="1">Homooctamer; tetramer of dimers.</text>
</comment>
<comment type="subcellular location">
    <subcellularLocation>
        <location evidence="1">Cytoplasm</location>
    </subcellularLocation>
</comment>
<comment type="similarity">
    <text evidence="1">Belongs to the PNP synthase family.</text>
</comment>
<reference key="1">
    <citation type="journal article" date="2007" name="PLoS Genet.">
        <title>Patterns and implications of gene gain and loss in the evolution of Prochlorococcus.</title>
        <authorList>
            <person name="Kettler G.C."/>
            <person name="Martiny A.C."/>
            <person name="Huang K."/>
            <person name="Zucker J."/>
            <person name="Coleman M.L."/>
            <person name="Rodrigue S."/>
            <person name="Chen F."/>
            <person name="Lapidus A."/>
            <person name="Ferriera S."/>
            <person name="Johnson J."/>
            <person name="Steglich C."/>
            <person name="Church G.M."/>
            <person name="Richardson P."/>
            <person name="Chisholm S.W."/>
        </authorList>
    </citation>
    <scope>NUCLEOTIDE SEQUENCE [LARGE SCALE GENOMIC DNA]</scope>
    <source>
        <strain>NATL2A</strain>
    </source>
</reference>
<name>PDXJ_PROMT</name>
<sequence>MASLGVNIDHIANVREARKTFEPDPVKMVLLAELGGADGITVHLREDRRHIQDRDLNLLKETVHTRLNLEMAATEEMTSIALNLKPDIVTLVPEKREEVTTEGGLDVIKNKRKLKEIIQRLSGEDIPVSLFVDPVQAQLENCAEVKAAWVELHTGKYAITKKKARDLELSILKESTAKAKSYGLRVNAGHGLTYQNVEPIAAIEGIEELNIGHTIISRALSVGLSQAVKEMKSLIINPRKDNFLL</sequence>
<protein>
    <recommendedName>
        <fullName evidence="1">Pyridoxine 5'-phosphate synthase</fullName>
        <shortName evidence="1">PNP synthase</shortName>
        <ecNumber evidence="1">2.6.99.2</ecNumber>
    </recommendedName>
</protein>
<evidence type="ECO:0000255" key="1">
    <source>
        <dbReference type="HAMAP-Rule" id="MF_00279"/>
    </source>
</evidence>
<gene>
    <name evidence="1" type="primary">pdxJ</name>
    <name type="ordered locus">PMN2A_0642</name>
</gene>
<keyword id="KW-0963">Cytoplasm</keyword>
<keyword id="KW-0664">Pyridoxine biosynthesis</keyword>
<keyword id="KW-1185">Reference proteome</keyword>
<keyword id="KW-0808">Transferase</keyword>
<organism>
    <name type="scientific">Prochlorococcus marinus (strain NATL2A)</name>
    <dbReference type="NCBI Taxonomy" id="59920"/>
    <lineage>
        <taxon>Bacteria</taxon>
        <taxon>Bacillati</taxon>
        <taxon>Cyanobacteriota</taxon>
        <taxon>Cyanophyceae</taxon>
        <taxon>Synechococcales</taxon>
        <taxon>Prochlorococcaceae</taxon>
        <taxon>Prochlorococcus</taxon>
    </lineage>
</organism>
<proteinExistence type="inferred from homology"/>
<feature type="chain" id="PRO_0000231831" description="Pyridoxine 5'-phosphate synthase">
    <location>
        <begin position="1"/>
        <end position="245"/>
    </location>
</feature>
<feature type="active site" description="Proton acceptor" evidence="1">
    <location>
        <position position="43"/>
    </location>
</feature>
<feature type="active site" description="Proton acceptor" evidence="1">
    <location>
        <position position="70"/>
    </location>
</feature>
<feature type="active site" description="Proton donor" evidence="1">
    <location>
        <position position="190"/>
    </location>
</feature>
<feature type="binding site" evidence="1">
    <location>
        <position position="7"/>
    </location>
    <ligand>
        <name>3-amino-2-oxopropyl phosphate</name>
        <dbReference type="ChEBI" id="CHEBI:57279"/>
    </ligand>
</feature>
<feature type="binding site" evidence="1">
    <location>
        <begin position="9"/>
        <end position="10"/>
    </location>
    <ligand>
        <name>1-deoxy-D-xylulose 5-phosphate</name>
        <dbReference type="ChEBI" id="CHEBI:57792"/>
    </ligand>
</feature>
<feature type="binding site" evidence="1">
    <location>
        <position position="18"/>
    </location>
    <ligand>
        <name>3-amino-2-oxopropyl phosphate</name>
        <dbReference type="ChEBI" id="CHEBI:57279"/>
    </ligand>
</feature>
<feature type="binding site" evidence="1">
    <location>
        <position position="45"/>
    </location>
    <ligand>
        <name>1-deoxy-D-xylulose 5-phosphate</name>
        <dbReference type="ChEBI" id="CHEBI:57792"/>
    </ligand>
</feature>
<feature type="binding site" evidence="1">
    <location>
        <position position="50"/>
    </location>
    <ligand>
        <name>1-deoxy-D-xylulose 5-phosphate</name>
        <dbReference type="ChEBI" id="CHEBI:57792"/>
    </ligand>
</feature>
<feature type="binding site" evidence="1">
    <location>
        <position position="100"/>
    </location>
    <ligand>
        <name>1-deoxy-D-xylulose 5-phosphate</name>
        <dbReference type="ChEBI" id="CHEBI:57792"/>
    </ligand>
</feature>
<feature type="binding site" evidence="1">
    <location>
        <position position="191"/>
    </location>
    <ligand>
        <name>3-amino-2-oxopropyl phosphate</name>
        <dbReference type="ChEBI" id="CHEBI:57279"/>
    </ligand>
</feature>
<feature type="binding site" evidence="1">
    <location>
        <begin position="212"/>
        <end position="213"/>
    </location>
    <ligand>
        <name>3-amino-2-oxopropyl phosphate</name>
        <dbReference type="ChEBI" id="CHEBI:57279"/>
    </ligand>
</feature>
<feature type="site" description="Transition state stabilizer" evidence="1">
    <location>
        <position position="151"/>
    </location>
</feature>
<dbReference type="EC" id="2.6.99.2" evidence="1"/>
<dbReference type="EMBL" id="CP000095">
    <property type="protein sequence ID" value="AAZ58133.1"/>
    <property type="molecule type" value="Genomic_DNA"/>
</dbReference>
<dbReference type="RefSeq" id="WP_011294731.1">
    <property type="nucleotide sequence ID" value="NC_007335.2"/>
</dbReference>
<dbReference type="SMR" id="Q46K45"/>
<dbReference type="STRING" id="59920.PMN2A_0642"/>
<dbReference type="KEGG" id="pmn:PMN2A_0642"/>
<dbReference type="HOGENOM" id="CLU_074563_0_0_3"/>
<dbReference type="OrthoDB" id="9806590at2"/>
<dbReference type="PhylomeDB" id="Q46K45"/>
<dbReference type="UniPathway" id="UPA00244">
    <property type="reaction ID" value="UER00313"/>
</dbReference>
<dbReference type="Proteomes" id="UP000002535">
    <property type="component" value="Chromosome"/>
</dbReference>
<dbReference type="GO" id="GO:0005829">
    <property type="term" value="C:cytosol"/>
    <property type="evidence" value="ECO:0007669"/>
    <property type="project" value="TreeGrafter"/>
</dbReference>
<dbReference type="GO" id="GO:0033856">
    <property type="term" value="F:pyridoxine 5'-phosphate synthase activity"/>
    <property type="evidence" value="ECO:0007669"/>
    <property type="project" value="UniProtKB-EC"/>
</dbReference>
<dbReference type="GO" id="GO:0008615">
    <property type="term" value="P:pyridoxine biosynthetic process"/>
    <property type="evidence" value="ECO:0007669"/>
    <property type="project" value="UniProtKB-UniRule"/>
</dbReference>
<dbReference type="CDD" id="cd00003">
    <property type="entry name" value="PNPsynthase"/>
    <property type="match status" value="1"/>
</dbReference>
<dbReference type="Gene3D" id="3.20.20.70">
    <property type="entry name" value="Aldolase class I"/>
    <property type="match status" value="1"/>
</dbReference>
<dbReference type="HAMAP" id="MF_00279">
    <property type="entry name" value="PdxJ"/>
    <property type="match status" value="1"/>
</dbReference>
<dbReference type="InterPro" id="IPR013785">
    <property type="entry name" value="Aldolase_TIM"/>
</dbReference>
<dbReference type="InterPro" id="IPR004569">
    <property type="entry name" value="PyrdxlP_synth_PdxJ"/>
</dbReference>
<dbReference type="InterPro" id="IPR036130">
    <property type="entry name" value="Pyridoxine-5'_phos_synth"/>
</dbReference>
<dbReference type="NCBIfam" id="TIGR00559">
    <property type="entry name" value="pdxJ"/>
    <property type="match status" value="1"/>
</dbReference>
<dbReference type="NCBIfam" id="NF003625">
    <property type="entry name" value="PRK05265.1-3"/>
    <property type="match status" value="1"/>
</dbReference>
<dbReference type="NCBIfam" id="NF003627">
    <property type="entry name" value="PRK05265.1-5"/>
    <property type="match status" value="1"/>
</dbReference>
<dbReference type="PANTHER" id="PTHR30456">
    <property type="entry name" value="PYRIDOXINE 5'-PHOSPHATE SYNTHASE"/>
    <property type="match status" value="1"/>
</dbReference>
<dbReference type="PANTHER" id="PTHR30456:SF0">
    <property type="entry name" value="PYRIDOXINE 5'-PHOSPHATE SYNTHASE"/>
    <property type="match status" value="1"/>
</dbReference>
<dbReference type="Pfam" id="PF03740">
    <property type="entry name" value="PdxJ"/>
    <property type="match status" value="1"/>
</dbReference>
<dbReference type="SUPFAM" id="SSF63892">
    <property type="entry name" value="Pyridoxine 5'-phosphate synthase"/>
    <property type="match status" value="1"/>
</dbReference>
<accession>Q46K45</accession>